<keyword id="KW-0150">Chloroplast</keyword>
<keyword id="KW-0413">Isomerase</keyword>
<keyword id="KW-0460">Magnesium</keyword>
<keyword id="KW-0479">Metal-binding</keyword>
<keyword id="KW-0934">Plastid</keyword>
<keyword id="KW-0809">Transit peptide</keyword>
<reference key="1">
    <citation type="journal article" date="2017" name="J. Exp. Bot.">
        <title>A (-)-kolavenyl diphosphate synthase catalyzes the first step of salvinorin A biosynthesis in Salvia divinorum.</title>
        <authorList>
            <person name="Chen X."/>
            <person name="Berim A."/>
            <person name="Dayan F.E."/>
            <person name="Gang D.R."/>
        </authorList>
    </citation>
    <scope>NUCLEOTIDE SEQUENCE [MRNA]</scope>
    <scope>FUNCTION</scope>
    <scope>CATALYTIC ACTIVITY</scope>
    <scope>COFACTOR</scope>
    <scope>ACTIVITY REGULATION</scope>
    <scope>BIOPHYSICOCHEMICAL PROPERTIES</scope>
    <scope>TISSUE SPECIFICITY</scope>
    <scope>DXDD MOTIF</scope>
    <scope>MUTAGENESIS OF VAL-200; PHE-255; ALA-314; SER-369 AND SER-402</scope>
    <source>
        <tissue>Peltate glandular trichome</tissue>
    </source>
</reference>
<reference key="2">
    <citation type="journal article" date="2017" name="Plant J.">
        <title>Biosynthesis of the psychotropic plant diterpene salvinorin A: Discovery and characterization of the Salvia divinorum clerodienyl diphosphate synthase.</title>
        <authorList>
            <person name="Pelot K.A."/>
            <person name="Mitchell R."/>
            <person name="Kwon M."/>
            <person name="Hagelthorn D.M."/>
            <person name="Wardman J.F."/>
            <person name="Chiang A."/>
            <person name="Bohlmann J."/>
            <person name="Ro D.K."/>
            <person name="Zerbe P."/>
        </authorList>
    </citation>
    <scope>NUCLEOTIDE SEQUENCE [MRNA]</scope>
    <scope>FUNCTION</scope>
    <scope>CATALYTIC ACTIVITY</scope>
    <scope>TISSUE SPECIFICITY</scope>
    <scope>MUTAGENESIS OF PHE-255; CYS-359 AND TRP-360</scope>
    <source>
        <tissue>Peltate glandular trichome</tissue>
    </source>
</reference>
<reference key="3">
    <citation type="journal article" date="2019" name="Nat. Prod. Rep.">
        <title>Non-volatile natural products in plant glandular trichomes: chemistry, biological activities and biosynthesis.</title>
        <authorList>
            <person name="Liu Y."/>
            <person name="Jing S.-X."/>
            <person name="Luo S.-H."/>
            <person name="Li S.-H."/>
        </authorList>
    </citation>
    <scope>PATHWAY</scope>
    <scope>REVIEW</scope>
</reference>
<protein>
    <recommendedName>
        <fullName evidence="7">(-)-kolavenyl diphosphate synthase, chloroplastic</fullName>
        <shortName evidence="7">SdKPS</shortName>
        <ecNumber evidence="4 5">5.5.1.28</ecNumber>
    </recommendedName>
    <alternativeName>
        <fullName evidence="6">Clerodienyl diphosphate synthase</fullName>
    </alternativeName>
    <alternativeName>
        <fullName evidence="6">Kolavenyl diphosphate synthase CPS2</fullName>
        <shortName evidence="6">SdCPS2</shortName>
    </alternativeName>
</protein>
<feature type="transit peptide" description="Chloroplast" evidence="3">
    <location>
        <begin position="1"/>
        <end position="47"/>
    </location>
</feature>
<feature type="chain" id="PRO_0000447688" description="(-)-kolavenyl diphosphate synthase, chloroplastic">
    <location>
        <begin position="48"/>
        <end position="787"/>
    </location>
</feature>
<feature type="short sequence motif" description="DXDD motif" evidence="10">
    <location>
        <begin position="368"/>
        <end position="371"/>
    </location>
</feature>
<feature type="binding site" evidence="2">
    <location>
        <position position="237"/>
    </location>
    <ligand>
        <name>substrate</name>
    </ligand>
</feature>
<feature type="binding site" evidence="1">
    <location>
        <position position="368"/>
    </location>
    <ligand>
        <name>Mg(2+)</name>
        <dbReference type="ChEBI" id="CHEBI:18420"/>
    </ligand>
</feature>
<feature type="binding site" evidence="1">
    <location>
        <position position="370"/>
    </location>
    <ligand>
        <name>Mg(2+)</name>
        <dbReference type="ChEBI" id="CHEBI:18420"/>
    </ligand>
</feature>
<feature type="binding site" evidence="2">
    <location>
        <position position="454"/>
    </location>
    <ligand>
        <name>substrate</name>
    </ligand>
</feature>
<feature type="mutagenesis site" description="No switch of product outcome." evidence="5">
    <original>V</original>
    <variation>I</variation>
    <location>
        <position position="200"/>
    </location>
</feature>
<feature type="mutagenesis site" description="Complete switch of product outcome from (-)-kolavenyl diphosphate to ent-copalyl diphosphate." evidence="4 5">
    <original>F</original>
    <variation>H</variation>
    <location>
        <position position="255"/>
    </location>
</feature>
<feature type="mutagenesis site" description="No switch of product outcome." evidence="5">
    <original>A</original>
    <variation>V</variation>
    <location>
        <position position="314"/>
    </location>
</feature>
<feature type="mutagenesis site" description="Catalyzes the production of ent-7,13E-copalyl diphosophate; when associated with S-360." evidence="4">
    <original>C</original>
    <variation>F</variation>
    <location>
        <position position="359"/>
    </location>
</feature>
<feature type="mutagenesis site" description="Catalyzes the production of ent-8alpha/beta-labda-13-en-8-ol diphosphate." evidence="4">
    <original>W</original>
    <variation>A</variation>
    <location>
        <position position="360"/>
    </location>
</feature>
<feature type="mutagenesis site" description="Catalyzes the production of ent-8alpha/beta-labda-13-en-8-ol diphosphate and of ent-7,13E-copalyl diphosophate. Increased ability to produce ent-7,13E-copalyl diphosophate; when associated with F-359." evidence="4">
    <original>W</original>
    <variation>S</variation>
    <location>
        <position position="360"/>
    </location>
</feature>
<feature type="mutagenesis site" description="No switch of product outcome." evidence="5">
    <original>S</original>
    <variation>V</variation>
    <location>
        <position position="369"/>
    </location>
</feature>
<feature type="mutagenesis site" description="No switch of product outcome." evidence="5">
    <original>S</original>
    <variation>C</variation>
    <location>
        <position position="402"/>
    </location>
</feature>
<feature type="sequence conflict" description="In Ref. 2; APH81400." evidence="9" ref="2">
    <original>N</original>
    <variation>H</variation>
    <location>
        <position position="308"/>
    </location>
</feature>
<feature type="sequence conflict" description="In Ref. 2; APH81400." evidence="9" ref="2">
    <original>Q</original>
    <variation>L</variation>
    <location>
        <position position="643"/>
    </location>
</feature>
<feature type="sequence conflict" description="In Ref. 2; APH81400." evidence="9" ref="2">
    <original>K</original>
    <variation>KQ</variation>
    <location>
        <position position="710"/>
    </location>
</feature>
<dbReference type="EC" id="5.5.1.28" evidence="4 5"/>
<dbReference type="EMBL" id="KX268505">
    <property type="protein sequence ID" value="AOZ15895.1"/>
    <property type="molecule type" value="mRNA"/>
</dbReference>
<dbReference type="EMBL" id="KX424877">
    <property type="protein sequence ID" value="APH81400.1"/>
    <property type="molecule type" value="mRNA"/>
</dbReference>
<dbReference type="SMR" id="A0A1S5RW73"/>
<dbReference type="KEGG" id="ag:AOZ15895"/>
<dbReference type="BRENDA" id="5.5.1.28">
    <property type="organism ID" value="15072"/>
</dbReference>
<dbReference type="BRENDA" id="5.5.1.B7">
    <property type="organism ID" value="15072"/>
</dbReference>
<dbReference type="GO" id="GO:0009507">
    <property type="term" value="C:chloroplast"/>
    <property type="evidence" value="ECO:0007669"/>
    <property type="project" value="UniProtKB-SubCell"/>
</dbReference>
<dbReference type="GO" id="GO:0016853">
    <property type="term" value="F:isomerase activity"/>
    <property type="evidence" value="ECO:0007669"/>
    <property type="project" value="UniProtKB-KW"/>
</dbReference>
<dbReference type="GO" id="GO:0000287">
    <property type="term" value="F:magnesium ion binding"/>
    <property type="evidence" value="ECO:0000314"/>
    <property type="project" value="UniProtKB"/>
</dbReference>
<dbReference type="GO" id="GO:0010333">
    <property type="term" value="F:terpene synthase activity"/>
    <property type="evidence" value="ECO:0000314"/>
    <property type="project" value="UniProtKB"/>
</dbReference>
<dbReference type="GO" id="GO:0016102">
    <property type="term" value="P:diterpenoid biosynthetic process"/>
    <property type="evidence" value="ECO:0000314"/>
    <property type="project" value="UniProtKB"/>
</dbReference>
<dbReference type="GO" id="GO:0009686">
    <property type="term" value="P:gibberellin biosynthetic process"/>
    <property type="evidence" value="ECO:0007669"/>
    <property type="project" value="TreeGrafter"/>
</dbReference>
<dbReference type="FunFam" id="1.50.10.130:FF:000002">
    <property type="entry name" value="Ent-copalyl diphosphate synthase, chloroplastic"/>
    <property type="match status" value="1"/>
</dbReference>
<dbReference type="Gene3D" id="1.50.10.160">
    <property type="match status" value="1"/>
</dbReference>
<dbReference type="Gene3D" id="1.10.600.10">
    <property type="entry name" value="Farnesyl Diphosphate Synthase"/>
    <property type="match status" value="1"/>
</dbReference>
<dbReference type="Gene3D" id="1.50.10.130">
    <property type="entry name" value="Terpene synthase, N-terminal domain"/>
    <property type="match status" value="1"/>
</dbReference>
<dbReference type="InterPro" id="IPR008949">
    <property type="entry name" value="Isoprenoid_synthase_dom_sf"/>
</dbReference>
<dbReference type="InterPro" id="IPR001906">
    <property type="entry name" value="Terpene_synth_N"/>
</dbReference>
<dbReference type="InterPro" id="IPR036965">
    <property type="entry name" value="Terpene_synth_N_sf"/>
</dbReference>
<dbReference type="InterPro" id="IPR050148">
    <property type="entry name" value="Terpene_synthase-like"/>
</dbReference>
<dbReference type="InterPro" id="IPR008930">
    <property type="entry name" value="Terpenoid_cyclase/PrenylTrfase"/>
</dbReference>
<dbReference type="PANTHER" id="PTHR31739">
    <property type="entry name" value="ENT-COPALYL DIPHOSPHATE SYNTHASE, CHLOROPLASTIC"/>
    <property type="match status" value="1"/>
</dbReference>
<dbReference type="PANTHER" id="PTHR31739:SF4">
    <property type="entry name" value="ENT-COPALYL DIPHOSPHATE SYNTHASE, CHLOROPLASTIC"/>
    <property type="match status" value="1"/>
</dbReference>
<dbReference type="Pfam" id="PF01397">
    <property type="entry name" value="Terpene_synth"/>
    <property type="match status" value="1"/>
</dbReference>
<dbReference type="SFLD" id="SFLDG01014">
    <property type="entry name" value="Terpene_Cyclase_Like_1_N-term"/>
    <property type="match status" value="1"/>
</dbReference>
<dbReference type="SFLD" id="SFLDG01605">
    <property type="entry name" value="Terpene_Cyclase_Like_1_N-term"/>
    <property type="match status" value="1"/>
</dbReference>
<dbReference type="SUPFAM" id="SSF48239">
    <property type="entry name" value="Terpenoid cyclases/Protein prenyltransferases"/>
    <property type="match status" value="2"/>
</dbReference>
<dbReference type="SUPFAM" id="SSF48576">
    <property type="entry name" value="Terpenoid synthases"/>
    <property type="match status" value="1"/>
</dbReference>
<accession>A0A1S5RW73</accession>
<accession>A0A1L3THX5</accession>
<proteinExistence type="evidence at protein level"/>
<comment type="function">
    <text evidence="4 5 8">Involved in the biosynthesis of clerodane diterpenoids natural products, including salvinorin A with potent agonistic activity on brain kappa-opioid receptors, thus conferring hallucinogenic properties (PubMed:30468448). Diterpene synthase that catalyzes the formation of (-)-kolavenyl diphosphate from geranylgeranyl diphosphate (GGPP) as the first reaction in salvinorin A biosynthesis (PubMed:27865008, PubMed:28204567).</text>
</comment>
<comment type="catalytic activity">
    <reaction evidence="4 5">
        <text>(2E,6E,10E)-geranylgeranyl diphosphate = (-)-kolavenyl diphosphate</text>
        <dbReference type="Rhea" id="RHEA:54684"/>
        <dbReference type="ChEBI" id="CHEBI:58756"/>
        <dbReference type="ChEBI" id="CHEBI:138310"/>
        <dbReference type="EC" id="5.5.1.28"/>
    </reaction>
    <physiologicalReaction direction="left-to-right" evidence="4 5">
        <dbReference type="Rhea" id="RHEA:54685"/>
    </physiologicalReaction>
</comment>
<comment type="cofactor">
    <cofactor evidence="5">
        <name>Mg(2+)</name>
        <dbReference type="ChEBI" id="CHEBI:18420"/>
    </cofactor>
</comment>
<comment type="activity regulation">
    <text evidence="5">Inhibited by high concentrations of magnesium.</text>
</comment>
<comment type="biophysicochemical properties">
    <kinetics>
        <KM evidence="5">1.9 uM for geranylgeranyl diphosphate</KM>
        <text evidence="5">kcat is 0.88 sec(-1) with geranylgeranyl diphosphate as substrate.</text>
    </kinetics>
    <phDependence>
        <text evidence="5">Optimum pH is 7.0.</text>
    </phDependence>
</comment>
<comment type="subcellular location">
    <subcellularLocation>
        <location evidence="3">Plastid</location>
        <location evidence="3">Chloroplast</location>
    </subcellularLocation>
</comment>
<comment type="tissue specificity">
    <text evidence="4 5">Expressed in peltate glandular trichomes of leaves (PubMed:27865008). Highly expressed in the first leaf pair (PubMed:28204567).</text>
</comment>
<comment type="domain">
    <text evidence="10">The Asp-Xaa-Asp-Asp (DXDD) motif is important for the catalytic activity through binding to Mg(2+).</text>
</comment>
<comment type="similarity">
    <text evidence="9">Belongs to the terpene synthase family. Tpsc subfamily.</text>
</comment>
<sequence>MSFATSLPRPTTTGAAGFGLPLATCISLSVSHSFSPKFGICNNTSLRLKSKAGSGCYEGIHRSQLAASTILEGHTPINPEVESEKIRLIERIRLMFRSMDDGEISVSPYDTAWVALVEDIGGSGGPQFPTSLEWISNNQLDDGSWGDRKFVLYDRILNTLACVVALTTWKMHPNKCEKGLRFISDNIEKLADEDEELMPVGFEIALPSLIDLAKRLCIEIPDNSASIKNIYAKRDSKLKRIPMDLMHKKPTSLLFSLEGMEGLNWDKLLDFQSEGSFLSSPSSTAYALHHTKDELCLEYLLKAVKKFNGGVPNAYPVDMFEHLWSVDRLRRLGISRYFQVEIDECLDYVYRYWTNKGICWARNMCVQDSDDSSMGFRLLRLYGYDVSIDVFKQFEEGGQFCSIPGQMTHAITGMYNLYRASQLMFPQEHILADARNFTANLLHQKRVTNSIVDKWIITKDLPGEVAYALDVPFYASLPRLEARFFLEQYGGDDDVWIGKTLYRMLYVNCNTYLELAKLDYKHCQTVHQLEWNSMQTWYRECNLGEFGLSERSLLLAYYIAASTAFEPEKSSERLAWAITTILVETIMSQELSDEQKREFVDEFVNISIINNQNGGRYKPGNRLVEVLINTVTLMAEGRGTDQQLSNAWKNWLKTWEEGGDLGEAEARLLLHTIHLSSGLDESSFSHPKYQQLLEATSKVCHQLRLFQNLKANDAQGSTSRLVTVTTFQIEAGMQELVKLIFTKTLEDLTSATKQSFFNIARSFYYTAYCPADTIDSHINKVLFEKIV</sequence>
<gene>
    <name evidence="7" type="primary">KPS</name>
    <name evidence="6" type="synonym">CPS2</name>
</gene>
<organism>
    <name type="scientific">Salvia divinorum</name>
    <name type="common">Maria pastora</name>
    <name type="synonym">Diviner's sage</name>
    <dbReference type="NCBI Taxonomy" id="28513"/>
    <lineage>
        <taxon>Eukaryota</taxon>
        <taxon>Viridiplantae</taxon>
        <taxon>Streptophyta</taxon>
        <taxon>Embryophyta</taxon>
        <taxon>Tracheophyta</taxon>
        <taxon>Spermatophyta</taxon>
        <taxon>Magnoliopsida</taxon>
        <taxon>eudicotyledons</taxon>
        <taxon>Gunneridae</taxon>
        <taxon>Pentapetalae</taxon>
        <taxon>asterids</taxon>
        <taxon>lamiids</taxon>
        <taxon>Lamiales</taxon>
        <taxon>Lamiaceae</taxon>
        <taxon>Nepetoideae</taxon>
        <taxon>Mentheae</taxon>
        <taxon>Salviinae</taxon>
        <taxon>Salvia</taxon>
        <taxon>Salvia subgen. Calosphace</taxon>
    </lineage>
</organism>
<evidence type="ECO:0000250" key="1">
    <source>
        <dbReference type="UniProtKB" id="C7BKP9"/>
    </source>
</evidence>
<evidence type="ECO:0000250" key="2">
    <source>
        <dbReference type="UniProtKB" id="Q38802"/>
    </source>
</evidence>
<evidence type="ECO:0000255" key="3"/>
<evidence type="ECO:0000269" key="4">
    <source>
    </source>
</evidence>
<evidence type="ECO:0000269" key="5">
    <source>
    </source>
</evidence>
<evidence type="ECO:0000303" key="6">
    <source>
    </source>
</evidence>
<evidence type="ECO:0000303" key="7">
    <source>
    </source>
</evidence>
<evidence type="ECO:0000303" key="8">
    <source>
    </source>
</evidence>
<evidence type="ECO:0000305" key="9"/>
<evidence type="ECO:0000305" key="10">
    <source>
    </source>
</evidence>
<name>KPS_SALDI</name>